<accession>B1IAH3</accession>
<reference key="1">
    <citation type="journal article" date="2010" name="Genome Biol.">
        <title>Structure and dynamics of the pan-genome of Streptococcus pneumoniae and closely related species.</title>
        <authorList>
            <person name="Donati C."/>
            <person name="Hiller N.L."/>
            <person name="Tettelin H."/>
            <person name="Muzzi A."/>
            <person name="Croucher N.J."/>
            <person name="Angiuoli S.V."/>
            <person name="Oggioni M."/>
            <person name="Dunning Hotopp J.C."/>
            <person name="Hu F.Z."/>
            <person name="Riley D.R."/>
            <person name="Covacci A."/>
            <person name="Mitchell T.J."/>
            <person name="Bentley S.D."/>
            <person name="Kilian M."/>
            <person name="Ehrlich G.D."/>
            <person name="Rappuoli R."/>
            <person name="Moxon E.R."/>
            <person name="Masignani V."/>
        </authorList>
    </citation>
    <scope>NUCLEOTIDE SEQUENCE [LARGE SCALE GENOMIC DNA]</scope>
    <source>
        <strain>Hungary19A-6</strain>
    </source>
</reference>
<organism>
    <name type="scientific">Streptococcus pneumoniae (strain Hungary19A-6)</name>
    <dbReference type="NCBI Taxonomy" id="487214"/>
    <lineage>
        <taxon>Bacteria</taxon>
        <taxon>Bacillati</taxon>
        <taxon>Bacillota</taxon>
        <taxon>Bacilli</taxon>
        <taxon>Lactobacillales</taxon>
        <taxon>Streptococcaceae</taxon>
        <taxon>Streptococcus</taxon>
    </lineage>
</organism>
<dbReference type="EMBL" id="CP000936">
    <property type="protein sequence ID" value="ACA37203.1"/>
    <property type="molecule type" value="Genomic_DNA"/>
</dbReference>
<dbReference type="RefSeq" id="WP_001085808.1">
    <property type="nucleotide sequence ID" value="NC_010380.1"/>
</dbReference>
<dbReference type="SMR" id="B1IAH3"/>
<dbReference type="GeneID" id="49599320"/>
<dbReference type="KEGG" id="spv:SPH_0723"/>
<dbReference type="HOGENOM" id="CLU_074237_2_1_9"/>
<dbReference type="Proteomes" id="UP000002163">
    <property type="component" value="Chromosome"/>
</dbReference>
<dbReference type="GO" id="GO:0022625">
    <property type="term" value="C:cytosolic large ribosomal subunit"/>
    <property type="evidence" value="ECO:0007669"/>
    <property type="project" value="TreeGrafter"/>
</dbReference>
<dbReference type="GO" id="GO:0070180">
    <property type="term" value="F:large ribosomal subunit rRNA binding"/>
    <property type="evidence" value="ECO:0007669"/>
    <property type="project" value="UniProtKB-UniRule"/>
</dbReference>
<dbReference type="GO" id="GO:0003735">
    <property type="term" value="F:structural constituent of ribosome"/>
    <property type="evidence" value="ECO:0007669"/>
    <property type="project" value="InterPro"/>
</dbReference>
<dbReference type="GO" id="GO:0006412">
    <property type="term" value="P:translation"/>
    <property type="evidence" value="ECO:0007669"/>
    <property type="project" value="UniProtKB-UniRule"/>
</dbReference>
<dbReference type="CDD" id="cd00349">
    <property type="entry name" value="Ribosomal_L11"/>
    <property type="match status" value="1"/>
</dbReference>
<dbReference type="FunFam" id="1.10.10.250:FF:000001">
    <property type="entry name" value="50S ribosomal protein L11"/>
    <property type="match status" value="1"/>
</dbReference>
<dbReference type="FunFam" id="3.30.1550.10:FF:000001">
    <property type="entry name" value="50S ribosomal protein L11"/>
    <property type="match status" value="1"/>
</dbReference>
<dbReference type="Gene3D" id="1.10.10.250">
    <property type="entry name" value="Ribosomal protein L11, C-terminal domain"/>
    <property type="match status" value="1"/>
</dbReference>
<dbReference type="Gene3D" id="3.30.1550.10">
    <property type="entry name" value="Ribosomal protein L11/L12, N-terminal domain"/>
    <property type="match status" value="1"/>
</dbReference>
<dbReference type="HAMAP" id="MF_00736">
    <property type="entry name" value="Ribosomal_uL11"/>
    <property type="match status" value="1"/>
</dbReference>
<dbReference type="InterPro" id="IPR000911">
    <property type="entry name" value="Ribosomal_uL11"/>
</dbReference>
<dbReference type="InterPro" id="IPR006519">
    <property type="entry name" value="Ribosomal_uL11_bac-typ"/>
</dbReference>
<dbReference type="InterPro" id="IPR020783">
    <property type="entry name" value="Ribosomal_uL11_C"/>
</dbReference>
<dbReference type="InterPro" id="IPR036769">
    <property type="entry name" value="Ribosomal_uL11_C_sf"/>
</dbReference>
<dbReference type="InterPro" id="IPR020785">
    <property type="entry name" value="Ribosomal_uL11_CS"/>
</dbReference>
<dbReference type="InterPro" id="IPR020784">
    <property type="entry name" value="Ribosomal_uL11_N"/>
</dbReference>
<dbReference type="InterPro" id="IPR036796">
    <property type="entry name" value="Ribosomal_uL11_N_sf"/>
</dbReference>
<dbReference type="NCBIfam" id="TIGR01632">
    <property type="entry name" value="L11_bact"/>
    <property type="match status" value="1"/>
</dbReference>
<dbReference type="PANTHER" id="PTHR11661">
    <property type="entry name" value="60S RIBOSOMAL PROTEIN L12"/>
    <property type="match status" value="1"/>
</dbReference>
<dbReference type="PANTHER" id="PTHR11661:SF1">
    <property type="entry name" value="LARGE RIBOSOMAL SUBUNIT PROTEIN UL11M"/>
    <property type="match status" value="1"/>
</dbReference>
<dbReference type="Pfam" id="PF00298">
    <property type="entry name" value="Ribosomal_L11"/>
    <property type="match status" value="1"/>
</dbReference>
<dbReference type="Pfam" id="PF03946">
    <property type="entry name" value="Ribosomal_L11_N"/>
    <property type="match status" value="1"/>
</dbReference>
<dbReference type="SMART" id="SM00649">
    <property type="entry name" value="RL11"/>
    <property type="match status" value="1"/>
</dbReference>
<dbReference type="SUPFAM" id="SSF54747">
    <property type="entry name" value="Ribosomal L11/L12e N-terminal domain"/>
    <property type="match status" value="1"/>
</dbReference>
<dbReference type="SUPFAM" id="SSF46906">
    <property type="entry name" value="Ribosomal protein L11, C-terminal domain"/>
    <property type="match status" value="1"/>
</dbReference>
<dbReference type="PROSITE" id="PS00359">
    <property type="entry name" value="RIBOSOMAL_L11"/>
    <property type="match status" value="1"/>
</dbReference>
<sequence length="141" mass="14814">MAKKVEKLVKLQIPAGKATPAPPVGPALGQAGINIMGFTKEFNARTADQAGMIIPVVISVYEDKSFTFVTKTPPAAVLLKKAAGVEKGSGTPNKTKVATVTRAQVQEIAETKMPDLNAANIESAMRMIEGTARSMGFTVVD</sequence>
<feature type="chain" id="PRO_1000195725" description="Large ribosomal subunit protein uL11">
    <location>
        <begin position="1"/>
        <end position="141"/>
    </location>
</feature>
<name>RL11_STRPI</name>
<gene>
    <name evidence="1" type="primary">rplK</name>
    <name type="ordered locus">SPH_0723</name>
</gene>
<evidence type="ECO:0000255" key="1">
    <source>
        <dbReference type="HAMAP-Rule" id="MF_00736"/>
    </source>
</evidence>
<evidence type="ECO:0000305" key="2"/>
<proteinExistence type="inferred from homology"/>
<comment type="function">
    <text evidence="1">Forms part of the ribosomal stalk which helps the ribosome interact with GTP-bound translation factors.</text>
</comment>
<comment type="subunit">
    <text evidence="1">Part of the ribosomal stalk of the 50S ribosomal subunit. Interacts with L10 and the large rRNA to form the base of the stalk. L10 forms an elongated spine to which L12 dimers bind in a sequential fashion forming a multimeric L10(L12)X complex.</text>
</comment>
<comment type="PTM">
    <text evidence="1">One or more lysine residues are methylated.</text>
</comment>
<comment type="similarity">
    <text evidence="1">Belongs to the universal ribosomal protein uL11 family.</text>
</comment>
<protein>
    <recommendedName>
        <fullName evidence="1">Large ribosomal subunit protein uL11</fullName>
    </recommendedName>
    <alternativeName>
        <fullName evidence="2">50S ribosomal protein L11</fullName>
    </alternativeName>
</protein>
<keyword id="KW-0488">Methylation</keyword>
<keyword id="KW-0687">Ribonucleoprotein</keyword>
<keyword id="KW-0689">Ribosomal protein</keyword>
<keyword id="KW-0694">RNA-binding</keyword>
<keyword id="KW-0699">rRNA-binding</keyword>